<name>MCEL_FOWPN</name>
<keyword id="KW-0378">Hydrolase</keyword>
<keyword id="KW-0460">Magnesium</keyword>
<keyword id="KW-0479">Metal-binding</keyword>
<keyword id="KW-0489">Methyltransferase</keyword>
<keyword id="KW-0506">mRNA capping</keyword>
<keyword id="KW-0507">mRNA processing</keyword>
<keyword id="KW-0511">Multifunctional enzyme</keyword>
<keyword id="KW-0548">Nucleotidyltransferase</keyword>
<keyword id="KW-1185">Reference proteome</keyword>
<keyword id="KW-0694">RNA-binding</keyword>
<keyword id="KW-0949">S-adenosyl-L-methionine</keyword>
<keyword id="KW-0808">Transferase</keyword>
<keyword id="KW-0946">Virion</keyword>
<evidence type="ECO:0000250" key="1"/>
<evidence type="ECO:0000250" key="2">
    <source>
        <dbReference type="UniProtKB" id="P04298"/>
    </source>
</evidence>
<evidence type="ECO:0000255" key="3">
    <source>
        <dbReference type="PROSITE-ProRule" id="PRU00895"/>
    </source>
</evidence>
<evidence type="ECO:0000305" key="4"/>
<sequence>MDKYISKTPLSCYFEELVDTFISVVNSINKVDESKHHEVELILFKPPIITLTNLYNMATTTESYIEFTMLPVDKPNTKFRNRIPLSKIHGLDVKNNQLVESLDGFIWEEKSLLLKKDISDNSSAIIKYSIEEKTLFVDYKRRNASIKLELVSVVRAKLRNIVIDFKMKYFLGSGAQSANSSSLLCALNHPKNKPSLYIEFEIMMQDKNISKKKLLEELNMSASALFLSHPKYIRLCPSINPILRTHLLKKQDIININTDDLYITSKTDGIFSHVYIEKKSIFCYFSHLGYIKEYTASREIEETIYLYAEMRKEESILYLTVIKVLKPCMEDRLSELAFVKNHLTGIHDRLVFVTKCYDGPFESSSDLVVSIEEMLKTEQEGIILFYSKGEDSTTDYKVKKDNTIDQCVNVIYRYMSSEPIVFNDKGSFLEYKRYSNDKGFPKEFSTGKLDLNGSVEYINNIYCIEIKHLNPCTGITNLVLPIKFIAEFSHNDELIQPRIDKTMKYLYESGYYGNQLSVIMDHLNDQKLRIGDVFEEEKLADIAAHMKLKDSMRLNPDGNYFLSNRVRGALGILSNFVKTLLISLYCSKTYLDNHSKRKVLAIDFGNGADLEKYFYGEIALMVATDPDDNAIETGKKRYNERNAGDKSKYYKFNYIKETIRSETYVSSIRQVLYFEKFSLVDWQFAIHYSFHPKHYSTIMTNLQELTESGCKVLITTMDGDYLDTLKEKKKFIIRKLLPETENYLSIEKIDDDKVLVYNPSSMSKPMAEYIVRRDTLIRVFREYKFKLIDSCNFKTIIDRNISFINGVSRLESRGSTKNFFELNRKALEECNDTDVLELLSHYMVYVFSKEV</sequence>
<feature type="chain" id="PRO_0000210130" description="mRNA-capping enzyme catalytic subunit">
    <location>
        <begin position="1"/>
        <end position="851"/>
    </location>
</feature>
<feature type="domain" description="mRNA cap 0 methyltransferase" evidence="3">
    <location>
        <begin position="565"/>
        <end position="850"/>
    </location>
</feature>
<feature type="region of interest" description="Triphosphatase-guanylyltransferase" evidence="1">
    <location>
        <begin position="1"/>
        <end position="544"/>
    </location>
</feature>
<feature type="active site" description="N6-GMP-lysine intermediate" evidence="1">
    <location>
        <position position="266"/>
    </location>
</feature>
<feature type="binding site" evidence="2">
    <location>
        <position position="38"/>
    </location>
    <ligand>
        <name>Mg(2+)</name>
        <dbReference type="ChEBI" id="CHEBI:18420"/>
        <note>catalytic; for RNA triphosphatase activity</note>
    </ligand>
</feature>
<feature type="binding site" evidence="2">
    <location>
        <position position="40"/>
    </location>
    <ligand>
        <name>Mg(2+)</name>
        <dbReference type="ChEBI" id="CHEBI:18420"/>
        <note>catalytic; for RNA triphosphatase activity</note>
    </ligand>
</feature>
<feature type="binding site" evidence="2">
    <location>
        <position position="199"/>
    </location>
    <ligand>
        <name>Mg(2+)</name>
        <dbReference type="ChEBI" id="CHEBI:18420"/>
        <note>catalytic; for RNA triphosphatase activity</note>
    </ligand>
</feature>
<feature type="binding site" evidence="2">
    <location>
        <position position="201"/>
    </location>
    <ligand>
        <name>Mg(2+)</name>
        <dbReference type="ChEBI" id="CHEBI:18420"/>
        <note>catalytic; for RNA triphosphatase activity</note>
    </ligand>
</feature>
<feature type="binding site" evidence="3">
    <location>
        <begin position="554"/>
        <end position="555"/>
    </location>
    <ligand>
        <name>S-adenosyl-L-methionine</name>
        <dbReference type="ChEBI" id="CHEBI:59789"/>
    </ligand>
</feature>
<feature type="binding site" evidence="3">
    <location>
        <begin position="574"/>
        <end position="575"/>
    </location>
    <ligand>
        <name>mRNA</name>
        <dbReference type="ChEBI" id="CHEBI:33699"/>
    </ligand>
    <ligandPart>
        <name>mRNA cap</name>
    </ligandPart>
</feature>
<feature type="binding site" evidence="3">
    <location>
        <position position="578"/>
    </location>
    <ligand>
        <name>S-adenosyl-L-methionine</name>
        <dbReference type="ChEBI" id="CHEBI:59789"/>
    </ligand>
</feature>
<feature type="binding site" evidence="3">
    <location>
        <position position="603"/>
    </location>
    <ligand>
        <name>S-adenosyl-L-methionine</name>
        <dbReference type="ChEBI" id="CHEBI:59789"/>
    </ligand>
</feature>
<feature type="binding site" evidence="3">
    <location>
        <position position="625"/>
    </location>
    <ligand>
        <name>S-adenosyl-L-methionine</name>
        <dbReference type="ChEBI" id="CHEBI:59789"/>
    </ligand>
</feature>
<feature type="binding site" evidence="3">
    <location>
        <begin position="683"/>
        <end position="685"/>
    </location>
    <ligand>
        <name>S-adenosyl-L-methionine</name>
        <dbReference type="ChEBI" id="CHEBI:59789"/>
    </ligand>
</feature>
<feature type="site" description="Essential for RNA triphosphatase activity" evidence="1">
    <location>
        <position position="80"/>
    </location>
</feature>
<feature type="site" description="Essential for RNA triphosphatase activity" evidence="1">
    <location>
        <position position="110"/>
    </location>
</feature>
<feature type="site" description="Essential for RNA triphosphatase activity" evidence="1">
    <location>
        <position position="131"/>
    </location>
</feature>
<feature type="site" description="Essential for RNA triphosphatase activity" evidence="1">
    <location>
        <position position="164"/>
    </location>
</feature>
<feature type="site" description="Essential for RNA triphosphatase activity" evidence="1">
    <location>
        <position position="166"/>
    </location>
</feature>
<feature type="site" description="mRNA cap binding" evidence="3">
    <location>
        <position position="612"/>
    </location>
</feature>
<feature type="site" description="mRNA cap binding" evidence="3">
    <location>
        <position position="637"/>
    </location>
</feature>
<feature type="site" description="mRNA cap binding" evidence="3">
    <location>
        <position position="687"/>
    </location>
</feature>
<feature type="site" description="mRNA cap binding" evidence="3">
    <location>
        <position position="768"/>
    </location>
</feature>
<feature type="site" description="mRNA cap binding" evidence="3">
    <location>
        <position position="842"/>
    </location>
</feature>
<accession>Q9J584</accession>
<organism>
    <name type="scientific">Fowlpox virus (strain NVSL)</name>
    <name type="common">FPV</name>
    <dbReference type="NCBI Taxonomy" id="928301"/>
    <lineage>
        <taxon>Viruses</taxon>
        <taxon>Varidnaviria</taxon>
        <taxon>Bamfordvirae</taxon>
        <taxon>Nucleocytoviricota</taxon>
        <taxon>Pokkesviricetes</taxon>
        <taxon>Chitovirales</taxon>
        <taxon>Poxviridae</taxon>
        <taxon>Chordopoxvirinae</taxon>
        <taxon>Avipoxvirus</taxon>
        <taxon>Fowlpox virus</taxon>
    </lineage>
</organism>
<comment type="function">
    <text evidence="1">Catalytic subunit of the mRNA capping enzyme which catalyzes three enzymatic reactions: the 5' triphosphate end of the pre-mRNA is hydrolyzed to a diphosphate by RNA 5' triphosphatase; the diphosphate RNA end is capped with GMP by RNA guanylyltransferase and the GpppN cap is methylated by RNA (guanine-N7) methyltransferase. Heterodimeric mRNA capping enzyme catalyzes the linkage of a N7-methyl-guanosine moiety to the first transcribed nucleotide (cap 0 structure), whereas the polymerase associated VP39 is responsible for a second methylation at the 2'-O position of the ribose (cap 1 structure) (By similarity).</text>
</comment>
<comment type="function">
    <text evidence="1">The heterodimeric enzyme is also involved in early viral gene transcription termination and intermediate viral gene transcription initiation. Early gene transcription termination requires the termination factor VTF, the DNA-dependent ATPase NPH-I and the Rap94 subunit of the viral RNA polymerase, as well as the presence of a specific termination motif. Binds, together with RAP94, to the termination motif 5'-UUUUUNU-3' in the nascent early mRNA (By similarity).</text>
</comment>
<comment type="catalytic activity">
    <reaction evidence="2">
        <text>a 5'-end triphospho-ribonucleoside in mRNA + H2O = a 5'-end diphospho-ribonucleoside in mRNA + phosphate + H(+)</text>
        <dbReference type="Rhea" id="RHEA:67004"/>
        <dbReference type="Rhea" id="RHEA-COMP:17164"/>
        <dbReference type="Rhea" id="RHEA-COMP:17165"/>
        <dbReference type="ChEBI" id="CHEBI:15377"/>
        <dbReference type="ChEBI" id="CHEBI:15378"/>
        <dbReference type="ChEBI" id="CHEBI:43474"/>
        <dbReference type="ChEBI" id="CHEBI:167616"/>
        <dbReference type="ChEBI" id="CHEBI:167618"/>
        <dbReference type="EC" id="3.6.1.74"/>
    </reaction>
    <physiologicalReaction direction="left-to-right" evidence="2">
        <dbReference type="Rhea" id="RHEA:67005"/>
    </physiologicalReaction>
</comment>
<comment type="catalytic activity">
    <reaction>
        <text>a 5'-end diphospho-ribonucleoside in mRNA + GTP + H(+) = a 5'-end (5'-triphosphoguanosine)-ribonucleoside in mRNA + diphosphate</text>
        <dbReference type="Rhea" id="RHEA:67012"/>
        <dbReference type="Rhea" id="RHEA-COMP:17165"/>
        <dbReference type="Rhea" id="RHEA-COMP:17166"/>
        <dbReference type="ChEBI" id="CHEBI:15378"/>
        <dbReference type="ChEBI" id="CHEBI:33019"/>
        <dbReference type="ChEBI" id="CHEBI:37565"/>
        <dbReference type="ChEBI" id="CHEBI:167616"/>
        <dbReference type="ChEBI" id="CHEBI:167617"/>
        <dbReference type="EC" id="2.7.7.50"/>
    </reaction>
</comment>
<comment type="catalytic activity">
    <reaction evidence="3">
        <text>a 5'-end (5'-triphosphoguanosine)-ribonucleoside in mRNA + S-adenosyl-L-methionine = a 5'-end (N(7)-methyl 5'-triphosphoguanosine)-ribonucleoside in mRNA + S-adenosyl-L-homocysteine</text>
        <dbReference type="Rhea" id="RHEA:67008"/>
        <dbReference type="Rhea" id="RHEA-COMP:17166"/>
        <dbReference type="Rhea" id="RHEA-COMP:17167"/>
        <dbReference type="ChEBI" id="CHEBI:57856"/>
        <dbReference type="ChEBI" id="CHEBI:59789"/>
        <dbReference type="ChEBI" id="CHEBI:156461"/>
        <dbReference type="ChEBI" id="CHEBI:167617"/>
        <dbReference type="EC" id="2.1.1.56"/>
    </reaction>
</comment>
<comment type="cofactor">
    <cofactor evidence="2">
        <name>Mg(2+)</name>
        <dbReference type="ChEBI" id="CHEBI:18420"/>
    </cofactor>
</comment>
<comment type="subunit">
    <text evidence="1">Heterodimer of a catalytic and a regulatory subunit. Intrinsic methyltransferase activity of the catalytic subunit is weak and needs to be stimulated 30- to 50-fold by the regulatory subunit, which is itself catalytically inert (By similarity).</text>
</comment>
<comment type="subcellular location">
    <subcellularLocation>
        <location evidence="4">Virion</location>
    </subcellularLocation>
    <text>All the enzymes and other proteins required to synthesize early mRNAs are packaged within the virion core along with the DNA genome.</text>
</comment>
<comment type="domain">
    <text evidence="1">The N-terminus contains the triphosphatase and guanylyltransferase domains, whereas the C-terminus contains the methyltransferase domain. The N-terminus is involved in binding to the termination motif 5'-UUUUUNU-3' in the nascent mRNA (By similarity).</text>
</comment>
<comment type="similarity">
    <text evidence="4">In the N-terminal section; belongs to the dsDNA virus mRNA guanylyltransferase family.</text>
</comment>
<comment type="similarity">
    <text evidence="3">In the C-terminal section; belongs to the class I-like SAM-binding methyltransferase superfamily. mRNA cap 0 methyltransferase family.</text>
</comment>
<gene>
    <name type="ordered locus">FPV146</name>
</gene>
<organismHost>
    <name type="scientific">Vertebrata</name>
    <dbReference type="NCBI Taxonomy" id="7742"/>
</organismHost>
<protein>
    <recommendedName>
        <fullName>mRNA-capping enzyme catalytic subunit</fullName>
    </recommendedName>
    <alternativeName>
        <fullName>Virus termination factor large subunit</fullName>
        <shortName>VTF large subunit</shortName>
    </alternativeName>
    <alternativeName>
        <fullName>mRNA-capping enzyme 97 kDa subunit</fullName>
    </alternativeName>
    <alternativeName>
        <fullName>mRNA-capping enzyme large subunit</fullName>
    </alternativeName>
    <domain>
        <recommendedName>
            <fullName>Polynucleotide 5'-triphosphatase</fullName>
            <ecNumber>3.6.1.74</ecNumber>
        </recommendedName>
        <alternativeName>
            <fullName>mRNA 5'-triphosphatase</fullName>
            <shortName>TPase</shortName>
        </alternativeName>
    </domain>
    <domain>
        <recommendedName>
            <fullName>mRNA guanylyltransferase</fullName>
            <ecNumber>2.7.7.50</ecNumber>
        </recommendedName>
        <alternativeName>
            <fullName>GTP--RNA guanylyltransferase</fullName>
            <shortName>GTase</shortName>
        </alternativeName>
    </domain>
    <domain>
        <recommendedName>
            <fullName>mRNA (guanine-N(7))-methyltransferase</fullName>
            <ecNumber>2.1.1.56</ecNumber>
        </recommendedName>
        <alternativeName>
            <fullName>mRNA cap methyltransferase</fullName>
        </alternativeName>
    </domain>
</protein>
<proteinExistence type="inferred from homology"/>
<dbReference type="EC" id="3.6.1.74"/>
<dbReference type="EC" id="2.7.7.50"/>
<dbReference type="EC" id="2.1.1.56"/>
<dbReference type="EMBL" id="AF198100">
    <property type="protein sequence ID" value="AAF44490.1"/>
    <property type="molecule type" value="Genomic_DNA"/>
</dbReference>
<dbReference type="RefSeq" id="NP_039109.1">
    <property type="nucleotide sequence ID" value="NC_002188.1"/>
</dbReference>
<dbReference type="SMR" id="Q9J584"/>
<dbReference type="GeneID" id="1486694"/>
<dbReference type="KEGG" id="vg:1486694"/>
<dbReference type="Proteomes" id="UP000008597">
    <property type="component" value="Segment"/>
</dbReference>
<dbReference type="GO" id="GO:0044423">
    <property type="term" value="C:virion component"/>
    <property type="evidence" value="ECO:0007669"/>
    <property type="project" value="UniProtKB-KW"/>
</dbReference>
<dbReference type="GO" id="GO:0050355">
    <property type="term" value="F:inorganic triphosphate phosphatase activity"/>
    <property type="evidence" value="ECO:0007669"/>
    <property type="project" value="InterPro"/>
</dbReference>
<dbReference type="GO" id="GO:0046872">
    <property type="term" value="F:metal ion binding"/>
    <property type="evidence" value="ECO:0007669"/>
    <property type="project" value="UniProtKB-KW"/>
</dbReference>
<dbReference type="GO" id="GO:0004482">
    <property type="term" value="F:mRNA 5'-cap (guanine-N7-)-methyltransferase activity"/>
    <property type="evidence" value="ECO:0007669"/>
    <property type="project" value="UniProtKB-EC"/>
</dbReference>
<dbReference type="GO" id="GO:0140818">
    <property type="term" value="F:mRNA 5'-triphosphate monophosphatase activity"/>
    <property type="evidence" value="ECO:0007669"/>
    <property type="project" value="RHEA"/>
</dbReference>
<dbReference type="GO" id="GO:0004484">
    <property type="term" value="F:mRNA guanylyltransferase activity"/>
    <property type="evidence" value="ECO:0007669"/>
    <property type="project" value="UniProtKB-EC"/>
</dbReference>
<dbReference type="GO" id="GO:0004651">
    <property type="term" value="F:polynucleotide 5'-phosphatase activity"/>
    <property type="evidence" value="ECO:0007669"/>
    <property type="project" value="UniProtKB-EC"/>
</dbReference>
<dbReference type="GO" id="GO:0003723">
    <property type="term" value="F:RNA binding"/>
    <property type="evidence" value="ECO:0007669"/>
    <property type="project" value="UniProtKB-KW"/>
</dbReference>
<dbReference type="Gene3D" id="2.40.50.830">
    <property type="match status" value="1"/>
</dbReference>
<dbReference type="Gene3D" id="3.20.100.20">
    <property type="match status" value="1"/>
</dbReference>
<dbReference type="Gene3D" id="3.30.470.140">
    <property type="match status" value="1"/>
</dbReference>
<dbReference type="Gene3D" id="3.40.50.150">
    <property type="entry name" value="Vaccinia Virus protein VP39"/>
    <property type="match status" value="1"/>
</dbReference>
<dbReference type="InterPro" id="IPR048425">
    <property type="entry name" value="MCEL_GT_NTPase"/>
</dbReference>
<dbReference type="InterPro" id="IPR048426">
    <property type="entry name" value="MCEL_GT_OB"/>
</dbReference>
<dbReference type="InterPro" id="IPR046429">
    <property type="entry name" value="MCEL_NTPase_sf"/>
</dbReference>
<dbReference type="InterPro" id="IPR046428">
    <property type="entry name" value="MCEL_OB_dom_sf"/>
</dbReference>
<dbReference type="InterPro" id="IPR019602">
    <property type="entry name" value="MCEL_TPase"/>
</dbReference>
<dbReference type="InterPro" id="IPR046430">
    <property type="entry name" value="MCEL_TPase_sf"/>
</dbReference>
<dbReference type="InterPro" id="IPR004971">
    <property type="entry name" value="mRNA_G-N7_MeTrfase_dom"/>
</dbReference>
<dbReference type="InterPro" id="IPR039753">
    <property type="entry name" value="RG7MT1"/>
</dbReference>
<dbReference type="InterPro" id="IPR029063">
    <property type="entry name" value="SAM-dependent_MTases_sf"/>
</dbReference>
<dbReference type="PANTHER" id="PTHR12189:SF2">
    <property type="entry name" value="MRNA CAP GUANINE-N7 METHYLTRANSFERASE"/>
    <property type="match status" value="1"/>
</dbReference>
<dbReference type="PANTHER" id="PTHR12189">
    <property type="entry name" value="MRNA GUANINE-7- METHYLTRANSFERASE"/>
    <property type="match status" value="1"/>
</dbReference>
<dbReference type="Pfam" id="PF21004">
    <property type="entry name" value="MCEL_GT_NTPase"/>
    <property type="match status" value="1"/>
</dbReference>
<dbReference type="Pfam" id="PF21005">
    <property type="entry name" value="MCEL_GT_OB"/>
    <property type="match status" value="1"/>
</dbReference>
<dbReference type="Pfam" id="PF10640">
    <property type="entry name" value="MCEL_TPase"/>
    <property type="match status" value="1"/>
</dbReference>
<dbReference type="Pfam" id="PF03291">
    <property type="entry name" value="mRNA_G-N7_MeTrfase"/>
    <property type="match status" value="1"/>
</dbReference>
<dbReference type="SUPFAM" id="SSF53335">
    <property type="entry name" value="S-adenosyl-L-methionine-dependent methyltransferases"/>
    <property type="match status" value="1"/>
</dbReference>
<dbReference type="PROSITE" id="PS51562">
    <property type="entry name" value="RNA_CAP0_MT"/>
    <property type="match status" value="1"/>
</dbReference>
<reference key="1">
    <citation type="journal article" date="2000" name="J. Virol.">
        <title>The genome of fowlpox virus.</title>
        <authorList>
            <person name="Afonso C.L."/>
            <person name="Tulman E.R."/>
            <person name="Lu Z."/>
            <person name="Zsak L."/>
            <person name="Kutish G.F."/>
            <person name="Rock D.L."/>
        </authorList>
    </citation>
    <scope>NUCLEOTIDE SEQUENCE [LARGE SCALE GENOMIC DNA]</scope>
</reference>